<sequence>MSQLVYFSSSSENTQRFIERLGLPAVRIPLNERERIQVDEPYILIVPSYGGGGTAGAVPRQVIRFLNDEHNRALLRGVIASGNRNFGEAYGRAGDVIARKCGVPWLYRFELMGTQSDIENVRKGVTEFWQRQPQNA</sequence>
<dbReference type="EMBL" id="AP009240">
    <property type="protein sequence ID" value="BAG78451.1"/>
    <property type="molecule type" value="Genomic_DNA"/>
</dbReference>
<dbReference type="RefSeq" id="WP_000080947.1">
    <property type="nucleotide sequence ID" value="NC_011415.1"/>
</dbReference>
<dbReference type="SMR" id="B6I665"/>
<dbReference type="GeneID" id="75172757"/>
<dbReference type="KEGG" id="ecy:ECSE_2927"/>
<dbReference type="HOGENOM" id="CLU_114845_0_0_6"/>
<dbReference type="Proteomes" id="UP000008199">
    <property type="component" value="Chromosome"/>
</dbReference>
<dbReference type="GO" id="GO:0010181">
    <property type="term" value="F:FMN binding"/>
    <property type="evidence" value="ECO:0007669"/>
    <property type="project" value="InterPro"/>
</dbReference>
<dbReference type="GO" id="GO:0036211">
    <property type="term" value="P:protein modification process"/>
    <property type="evidence" value="ECO:0007669"/>
    <property type="project" value="InterPro"/>
</dbReference>
<dbReference type="FunFam" id="3.40.50.360:FF:000005">
    <property type="entry name" value="Protein NrdI"/>
    <property type="match status" value="1"/>
</dbReference>
<dbReference type="Gene3D" id="3.40.50.360">
    <property type="match status" value="1"/>
</dbReference>
<dbReference type="HAMAP" id="MF_00128">
    <property type="entry name" value="NrdI"/>
    <property type="match status" value="1"/>
</dbReference>
<dbReference type="InterPro" id="IPR029039">
    <property type="entry name" value="Flavoprotein-like_sf"/>
</dbReference>
<dbReference type="InterPro" id="IPR020852">
    <property type="entry name" value="RNR_Ib_NrdI_bac"/>
</dbReference>
<dbReference type="InterPro" id="IPR004465">
    <property type="entry name" value="RNR_NrdI"/>
</dbReference>
<dbReference type="NCBIfam" id="TIGR00333">
    <property type="entry name" value="nrdI"/>
    <property type="match status" value="1"/>
</dbReference>
<dbReference type="PANTHER" id="PTHR37297">
    <property type="entry name" value="PROTEIN NRDI"/>
    <property type="match status" value="1"/>
</dbReference>
<dbReference type="PANTHER" id="PTHR37297:SF1">
    <property type="entry name" value="PROTEIN NRDI"/>
    <property type="match status" value="1"/>
</dbReference>
<dbReference type="Pfam" id="PF07972">
    <property type="entry name" value="Flavodoxin_NdrI"/>
    <property type="match status" value="1"/>
</dbReference>
<dbReference type="PIRSF" id="PIRSF005087">
    <property type="entry name" value="NrdI"/>
    <property type="match status" value="1"/>
</dbReference>
<dbReference type="SUPFAM" id="SSF52218">
    <property type="entry name" value="Flavoproteins"/>
    <property type="match status" value="1"/>
</dbReference>
<gene>
    <name evidence="1" type="primary">nrdI</name>
    <name type="ordered locus">ECSE_2927</name>
</gene>
<organism>
    <name type="scientific">Escherichia coli (strain SE11)</name>
    <dbReference type="NCBI Taxonomy" id="409438"/>
    <lineage>
        <taxon>Bacteria</taxon>
        <taxon>Pseudomonadati</taxon>
        <taxon>Pseudomonadota</taxon>
        <taxon>Gammaproteobacteria</taxon>
        <taxon>Enterobacterales</taxon>
        <taxon>Enterobacteriaceae</taxon>
        <taxon>Escherichia</taxon>
    </lineage>
</organism>
<comment type="function">
    <text evidence="1">Probably involved in ribonucleotide reductase function.</text>
</comment>
<comment type="similarity">
    <text evidence="1">Belongs to the NrdI family.</text>
</comment>
<reference key="1">
    <citation type="journal article" date="2008" name="DNA Res.">
        <title>Complete genome sequence and comparative analysis of the wild-type commensal Escherichia coli strain SE11 isolated from a healthy adult.</title>
        <authorList>
            <person name="Oshima K."/>
            <person name="Toh H."/>
            <person name="Ogura Y."/>
            <person name="Sasamoto H."/>
            <person name="Morita H."/>
            <person name="Park S.-H."/>
            <person name="Ooka T."/>
            <person name="Iyoda S."/>
            <person name="Taylor T.D."/>
            <person name="Hayashi T."/>
            <person name="Itoh K."/>
            <person name="Hattori M."/>
        </authorList>
    </citation>
    <scope>NUCLEOTIDE SEQUENCE [LARGE SCALE GENOMIC DNA]</scope>
    <source>
        <strain>SE11</strain>
    </source>
</reference>
<evidence type="ECO:0000255" key="1">
    <source>
        <dbReference type="HAMAP-Rule" id="MF_00128"/>
    </source>
</evidence>
<proteinExistence type="inferred from homology"/>
<accession>B6I665</accession>
<protein>
    <recommendedName>
        <fullName evidence="1">Protein NrdI</fullName>
    </recommendedName>
</protein>
<feature type="chain" id="PRO_1000095621" description="Protein NrdI">
    <location>
        <begin position="1"/>
        <end position="136"/>
    </location>
</feature>
<name>NRDI_ECOSE</name>